<sequence>MEAFLEEAKASSRVLAGISGADKNRILKEMAQALRASTAEILKANALDMEDADRNDLTPALKDRLLLDESRVEGMAVAVEEIAALKEPVGRVLDGWVTEDGLKIEKVSVPIGVIGIIYESRPNVTSDTAALSFKSSNVCVLKGGKEAQHSNEAIAKVLRAVLKKNGLPEALISLIPDASREGVAKLIKMDKYVDLIVPRGGEGLIRYVSENASVPVVKHDKGQCHTYIDEDANVENAIRIAINAKVQRPGVCNAMETLLVDTAIAKEVLPLLKEAFDAAHTELKGCGETQEIIEVAPATEVDFDTEYLANILNIRVVDGVEGAIDHIVRYGSGHSEAIITENITTAEAFLNGIDAAVVYVNASTRFTDGGAFGFGAEVGISTNKLHARGPMGIEGLTTYKFKIYGSGQIR</sequence>
<proteinExistence type="inferred from homology"/>
<name>PROA_SULNB</name>
<dbReference type="EC" id="1.2.1.41" evidence="1"/>
<dbReference type="EMBL" id="AP009179">
    <property type="protein sequence ID" value="BAF72707.1"/>
    <property type="molecule type" value="Genomic_DNA"/>
</dbReference>
<dbReference type="RefSeq" id="WP_012083517.1">
    <property type="nucleotide sequence ID" value="NC_009663.1"/>
</dbReference>
<dbReference type="SMR" id="A6QB48"/>
<dbReference type="STRING" id="387093.SUN_1760"/>
<dbReference type="KEGG" id="sun:SUN_1760"/>
<dbReference type="eggNOG" id="COG0014">
    <property type="taxonomic scope" value="Bacteria"/>
</dbReference>
<dbReference type="HOGENOM" id="CLU_030231_0_0_7"/>
<dbReference type="OrthoDB" id="9809970at2"/>
<dbReference type="UniPathway" id="UPA00098">
    <property type="reaction ID" value="UER00360"/>
</dbReference>
<dbReference type="Proteomes" id="UP000006378">
    <property type="component" value="Chromosome"/>
</dbReference>
<dbReference type="GO" id="GO:0005737">
    <property type="term" value="C:cytoplasm"/>
    <property type="evidence" value="ECO:0007669"/>
    <property type="project" value="UniProtKB-SubCell"/>
</dbReference>
<dbReference type="GO" id="GO:0004350">
    <property type="term" value="F:glutamate-5-semialdehyde dehydrogenase activity"/>
    <property type="evidence" value="ECO:0007669"/>
    <property type="project" value="UniProtKB-UniRule"/>
</dbReference>
<dbReference type="GO" id="GO:0050661">
    <property type="term" value="F:NADP binding"/>
    <property type="evidence" value="ECO:0007669"/>
    <property type="project" value="InterPro"/>
</dbReference>
<dbReference type="GO" id="GO:0055129">
    <property type="term" value="P:L-proline biosynthetic process"/>
    <property type="evidence" value="ECO:0007669"/>
    <property type="project" value="UniProtKB-UniRule"/>
</dbReference>
<dbReference type="CDD" id="cd07079">
    <property type="entry name" value="ALDH_F18-19_ProA-GPR"/>
    <property type="match status" value="1"/>
</dbReference>
<dbReference type="FunFam" id="3.40.309.10:FF:000006">
    <property type="entry name" value="Gamma-glutamyl phosphate reductase"/>
    <property type="match status" value="1"/>
</dbReference>
<dbReference type="Gene3D" id="3.40.605.10">
    <property type="entry name" value="Aldehyde Dehydrogenase, Chain A, domain 1"/>
    <property type="match status" value="1"/>
</dbReference>
<dbReference type="Gene3D" id="3.40.309.10">
    <property type="entry name" value="Aldehyde Dehydrogenase, Chain A, domain 2"/>
    <property type="match status" value="1"/>
</dbReference>
<dbReference type="HAMAP" id="MF_00412">
    <property type="entry name" value="ProA"/>
    <property type="match status" value="1"/>
</dbReference>
<dbReference type="InterPro" id="IPR016161">
    <property type="entry name" value="Ald_DH/histidinol_DH"/>
</dbReference>
<dbReference type="InterPro" id="IPR016163">
    <property type="entry name" value="Ald_DH_C"/>
</dbReference>
<dbReference type="InterPro" id="IPR016162">
    <property type="entry name" value="Ald_DH_N"/>
</dbReference>
<dbReference type="InterPro" id="IPR015590">
    <property type="entry name" value="Aldehyde_DH_dom"/>
</dbReference>
<dbReference type="InterPro" id="IPR020593">
    <property type="entry name" value="G-glutamylP_reductase_CS"/>
</dbReference>
<dbReference type="InterPro" id="IPR012134">
    <property type="entry name" value="Glu-5-SA_DH"/>
</dbReference>
<dbReference type="InterPro" id="IPR000965">
    <property type="entry name" value="GPR_dom"/>
</dbReference>
<dbReference type="NCBIfam" id="NF001221">
    <property type="entry name" value="PRK00197.1"/>
    <property type="match status" value="1"/>
</dbReference>
<dbReference type="NCBIfam" id="TIGR00407">
    <property type="entry name" value="proA"/>
    <property type="match status" value="1"/>
</dbReference>
<dbReference type="PANTHER" id="PTHR11063:SF8">
    <property type="entry name" value="DELTA-1-PYRROLINE-5-CARBOXYLATE SYNTHASE"/>
    <property type="match status" value="1"/>
</dbReference>
<dbReference type="PANTHER" id="PTHR11063">
    <property type="entry name" value="GLUTAMATE SEMIALDEHYDE DEHYDROGENASE"/>
    <property type="match status" value="1"/>
</dbReference>
<dbReference type="Pfam" id="PF00171">
    <property type="entry name" value="Aldedh"/>
    <property type="match status" value="1"/>
</dbReference>
<dbReference type="PIRSF" id="PIRSF000151">
    <property type="entry name" value="GPR"/>
    <property type="match status" value="1"/>
</dbReference>
<dbReference type="SUPFAM" id="SSF53720">
    <property type="entry name" value="ALDH-like"/>
    <property type="match status" value="1"/>
</dbReference>
<dbReference type="PROSITE" id="PS01223">
    <property type="entry name" value="PROA"/>
    <property type="match status" value="1"/>
</dbReference>
<reference key="1">
    <citation type="journal article" date="2007" name="Proc. Natl. Acad. Sci. U.S.A.">
        <title>Deep-sea vent epsilon-proteobacterial genomes provide insights into emergence of pathogens.</title>
        <authorList>
            <person name="Nakagawa S."/>
            <person name="Takaki Y."/>
            <person name="Shimamura S."/>
            <person name="Reysenbach A.-L."/>
            <person name="Takai K."/>
            <person name="Horikoshi K."/>
        </authorList>
    </citation>
    <scope>NUCLEOTIDE SEQUENCE [LARGE SCALE GENOMIC DNA]</scope>
    <source>
        <strain>NBC37-1</strain>
    </source>
</reference>
<accession>A6QB48</accession>
<comment type="function">
    <text evidence="1">Catalyzes the NADPH-dependent reduction of L-glutamate 5-phosphate into L-glutamate 5-semialdehyde and phosphate. The product spontaneously undergoes cyclization to form 1-pyrroline-5-carboxylate.</text>
</comment>
<comment type="catalytic activity">
    <reaction evidence="1">
        <text>L-glutamate 5-semialdehyde + phosphate + NADP(+) = L-glutamyl 5-phosphate + NADPH + H(+)</text>
        <dbReference type="Rhea" id="RHEA:19541"/>
        <dbReference type="ChEBI" id="CHEBI:15378"/>
        <dbReference type="ChEBI" id="CHEBI:43474"/>
        <dbReference type="ChEBI" id="CHEBI:57783"/>
        <dbReference type="ChEBI" id="CHEBI:58066"/>
        <dbReference type="ChEBI" id="CHEBI:58274"/>
        <dbReference type="ChEBI" id="CHEBI:58349"/>
        <dbReference type="EC" id="1.2.1.41"/>
    </reaction>
</comment>
<comment type="pathway">
    <text evidence="1">Amino-acid biosynthesis; L-proline biosynthesis; L-glutamate 5-semialdehyde from L-glutamate: step 2/2.</text>
</comment>
<comment type="subcellular location">
    <subcellularLocation>
        <location evidence="1">Cytoplasm</location>
    </subcellularLocation>
</comment>
<comment type="similarity">
    <text evidence="1">Belongs to the gamma-glutamyl phosphate reductase family.</text>
</comment>
<feature type="chain" id="PRO_1000050001" description="Gamma-glutamyl phosphate reductase">
    <location>
        <begin position="1"/>
        <end position="410"/>
    </location>
</feature>
<evidence type="ECO:0000255" key="1">
    <source>
        <dbReference type="HAMAP-Rule" id="MF_00412"/>
    </source>
</evidence>
<protein>
    <recommendedName>
        <fullName evidence="1">Gamma-glutamyl phosphate reductase</fullName>
        <shortName evidence="1">GPR</shortName>
        <ecNumber evidence="1">1.2.1.41</ecNumber>
    </recommendedName>
    <alternativeName>
        <fullName evidence="1">Glutamate-5-semialdehyde dehydrogenase</fullName>
    </alternativeName>
    <alternativeName>
        <fullName evidence="1">Glutamyl-gamma-semialdehyde dehydrogenase</fullName>
        <shortName evidence="1">GSA dehydrogenase</shortName>
    </alternativeName>
</protein>
<gene>
    <name evidence="1" type="primary">proA</name>
    <name type="ordered locus">SUN_1760</name>
</gene>
<keyword id="KW-0028">Amino-acid biosynthesis</keyword>
<keyword id="KW-0963">Cytoplasm</keyword>
<keyword id="KW-0521">NADP</keyword>
<keyword id="KW-0560">Oxidoreductase</keyword>
<keyword id="KW-0641">Proline biosynthesis</keyword>
<organism>
    <name type="scientific">Sulfurovum sp. (strain NBC37-1)</name>
    <dbReference type="NCBI Taxonomy" id="387093"/>
    <lineage>
        <taxon>Bacteria</taxon>
        <taxon>Pseudomonadati</taxon>
        <taxon>Campylobacterota</taxon>
        <taxon>Epsilonproteobacteria</taxon>
        <taxon>Campylobacterales</taxon>
        <taxon>Sulfurovaceae</taxon>
        <taxon>Sulfurovum</taxon>
    </lineage>
</organism>